<gene>
    <name evidence="1" type="primary">rplB</name>
    <name type="ordered locus">ECIAI39_3811</name>
</gene>
<proteinExistence type="inferred from homology"/>
<accession>B7NLN6</accession>
<name>RL2_ECO7I</name>
<reference key="1">
    <citation type="journal article" date="2009" name="PLoS Genet.">
        <title>Organised genome dynamics in the Escherichia coli species results in highly diverse adaptive paths.</title>
        <authorList>
            <person name="Touchon M."/>
            <person name="Hoede C."/>
            <person name="Tenaillon O."/>
            <person name="Barbe V."/>
            <person name="Baeriswyl S."/>
            <person name="Bidet P."/>
            <person name="Bingen E."/>
            <person name="Bonacorsi S."/>
            <person name="Bouchier C."/>
            <person name="Bouvet O."/>
            <person name="Calteau A."/>
            <person name="Chiapello H."/>
            <person name="Clermont O."/>
            <person name="Cruveiller S."/>
            <person name="Danchin A."/>
            <person name="Diard M."/>
            <person name="Dossat C."/>
            <person name="Karoui M.E."/>
            <person name="Frapy E."/>
            <person name="Garry L."/>
            <person name="Ghigo J.M."/>
            <person name="Gilles A.M."/>
            <person name="Johnson J."/>
            <person name="Le Bouguenec C."/>
            <person name="Lescat M."/>
            <person name="Mangenot S."/>
            <person name="Martinez-Jehanne V."/>
            <person name="Matic I."/>
            <person name="Nassif X."/>
            <person name="Oztas S."/>
            <person name="Petit M.A."/>
            <person name="Pichon C."/>
            <person name="Rouy Z."/>
            <person name="Ruf C.S."/>
            <person name="Schneider D."/>
            <person name="Tourret J."/>
            <person name="Vacherie B."/>
            <person name="Vallenet D."/>
            <person name="Medigue C."/>
            <person name="Rocha E.P.C."/>
            <person name="Denamur E."/>
        </authorList>
    </citation>
    <scope>NUCLEOTIDE SEQUENCE [LARGE SCALE GENOMIC DNA]</scope>
    <source>
        <strain>IAI39 / ExPEC</strain>
    </source>
</reference>
<protein>
    <recommendedName>
        <fullName evidence="1">Large ribosomal subunit protein uL2</fullName>
    </recommendedName>
    <alternativeName>
        <fullName evidence="3">50S ribosomal protein L2</fullName>
    </alternativeName>
</protein>
<evidence type="ECO:0000255" key="1">
    <source>
        <dbReference type="HAMAP-Rule" id="MF_01320"/>
    </source>
</evidence>
<evidence type="ECO:0000256" key="2">
    <source>
        <dbReference type="SAM" id="MobiDB-lite"/>
    </source>
</evidence>
<evidence type="ECO:0000305" key="3"/>
<keyword id="KW-0007">Acetylation</keyword>
<keyword id="KW-0687">Ribonucleoprotein</keyword>
<keyword id="KW-0689">Ribosomal protein</keyword>
<keyword id="KW-0694">RNA-binding</keyword>
<keyword id="KW-0699">rRNA-binding</keyword>
<dbReference type="EMBL" id="CU928164">
    <property type="protein sequence ID" value="CAR19925.1"/>
    <property type="molecule type" value="Genomic_DNA"/>
</dbReference>
<dbReference type="RefSeq" id="WP_000301864.1">
    <property type="nucleotide sequence ID" value="NC_011750.1"/>
</dbReference>
<dbReference type="RefSeq" id="YP_002409708.1">
    <property type="nucleotide sequence ID" value="NC_011750.1"/>
</dbReference>
<dbReference type="SMR" id="B7NLN6"/>
<dbReference type="STRING" id="585057.ECIAI39_3811"/>
<dbReference type="GeneID" id="93778670"/>
<dbReference type="KEGG" id="ect:ECIAI39_3811"/>
<dbReference type="PATRIC" id="fig|585057.6.peg.3948"/>
<dbReference type="HOGENOM" id="CLU_036235_2_1_6"/>
<dbReference type="PRO" id="PR:B7NLN6"/>
<dbReference type="Proteomes" id="UP000000749">
    <property type="component" value="Chromosome"/>
</dbReference>
<dbReference type="GO" id="GO:0005829">
    <property type="term" value="C:cytosol"/>
    <property type="evidence" value="ECO:0007669"/>
    <property type="project" value="UniProtKB-ARBA"/>
</dbReference>
<dbReference type="GO" id="GO:0015934">
    <property type="term" value="C:large ribosomal subunit"/>
    <property type="evidence" value="ECO:0007669"/>
    <property type="project" value="InterPro"/>
</dbReference>
<dbReference type="GO" id="GO:0019843">
    <property type="term" value="F:rRNA binding"/>
    <property type="evidence" value="ECO:0007669"/>
    <property type="project" value="UniProtKB-UniRule"/>
</dbReference>
<dbReference type="GO" id="GO:0003735">
    <property type="term" value="F:structural constituent of ribosome"/>
    <property type="evidence" value="ECO:0007669"/>
    <property type="project" value="InterPro"/>
</dbReference>
<dbReference type="GO" id="GO:0016740">
    <property type="term" value="F:transferase activity"/>
    <property type="evidence" value="ECO:0007669"/>
    <property type="project" value="InterPro"/>
</dbReference>
<dbReference type="GO" id="GO:0002181">
    <property type="term" value="P:cytoplasmic translation"/>
    <property type="evidence" value="ECO:0007669"/>
    <property type="project" value="TreeGrafter"/>
</dbReference>
<dbReference type="FunFam" id="2.30.30.30:FF:000001">
    <property type="entry name" value="50S ribosomal protein L2"/>
    <property type="match status" value="1"/>
</dbReference>
<dbReference type="FunFam" id="2.40.50.140:FF:000003">
    <property type="entry name" value="50S ribosomal protein L2"/>
    <property type="match status" value="1"/>
</dbReference>
<dbReference type="FunFam" id="4.10.950.10:FF:000001">
    <property type="entry name" value="50S ribosomal protein L2"/>
    <property type="match status" value="1"/>
</dbReference>
<dbReference type="Gene3D" id="2.30.30.30">
    <property type="match status" value="1"/>
</dbReference>
<dbReference type="Gene3D" id="2.40.50.140">
    <property type="entry name" value="Nucleic acid-binding proteins"/>
    <property type="match status" value="1"/>
</dbReference>
<dbReference type="Gene3D" id="4.10.950.10">
    <property type="entry name" value="Ribosomal protein L2, domain 3"/>
    <property type="match status" value="1"/>
</dbReference>
<dbReference type="HAMAP" id="MF_01320_B">
    <property type="entry name" value="Ribosomal_uL2_B"/>
    <property type="match status" value="1"/>
</dbReference>
<dbReference type="InterPro" id="IPR012340">
    <property type="entry name" value="NA-bd_OB-fold"/>
</dbReference>
<dbReference type="InterPro" id="IPR014722">
    <property type="entry name" value="Rib_uL2_dom2"/>
</dbReference>
<dbReference type="InterPro" id="IPR002171">
    <property type="entry name" value="Ribosomal_uL2"/>
</dbReference>
<dbReference type="InterPro" id="IPR005880">
    <property type="entry name" value="Ribosomal_uL2_bac/org-type"/>
</dbReference>
<dbReference type="InterPro" id="IPR022669">
    <property type="entry name" value="Ribosomal_uL2_C"/>
</dbReference>
<dbReference type="InterPro" id="IPR022671">
    <property type="entry name" value="Ribosomal_uL2_CS"/>
</dbReference>
<dbReference type="InterPro" id="IPR014726">
    <property type="entry name" value="Ribosomal_uL2_dom3"/>
</dbReference>
<dbReference type="InterPro" id="IPR022666">
    <property type="entry name" value="Ribosomal_uL2_RNA-bd_dom"/>
</dbReference>
<dbReference type="InterPro" id="IPR008991">
    <property type="entry name" value="Translation_prot_SH3-like_sf"/>
</dbReference>
<dbReference type="NCBIfam" id="TIGR01171">
    <property type="entry name" value="rplB_bact"/>
    <property type="match status" value="1"/>
</dbReference>
<dbReference type="PANTHER" id="PTHR13691:SF5">
    <property type="entry name" value="LARGE RIBOSOMAL SUBUNIT PROTEIN UL2M"/>
    <property type="match status" value="1"/>
</dbReference>
<dbReference type="PANTHER" id="PTHR13691">
    <property type="entry name" value="RIBOSOMAL PROTEIN L2"/>
    <property type="match status" value="1"/>
</dbReference>
<dbReference type="Pfam" id="PF00181">
    <property type="entry name" value="Ribosomal_L2"/>
    <property type="match status" value="1"/>
</dbReference>
<dbReference type="Pfam" id="PF03947">
    <property type="entry name" value="Ribosomal_L2_C"/>
    <property type="match status" value="1"/>
</dbReference>
<dbReference type="PIRSF" id="PIRSF002158">
    <property type="entry name" value="Ribosomal_L2"/>
    <property type="match status" value="1"/>
</dbReference>
<dbReference type="SMART" id="SM01383">
    <property type="entry name" value="Ribosomal_L2"/>
    <property type="match status" value="1"/>
</dbReference>
<dbReference type="SMART" id="SM01382">
    <property type="entry name" value="Ribosomal_L2_C"/>
    <property type="match status" value="1"/>
</dbReference>
<dbReference type="SUPFAM" id="SSF50249">
    <property type="entry name" value="Nucleic acid-binding proteins"/>
    <property type="match status" value="1"/>
</dbReference>
<dbReference type="SUPFAM" id="SSF50104">
    <property type="entry name" value="Translation proteins SH3-like domain"/>
    <property type="match status" value="1"/>
</dbReference>
<dbReference type="PROSITE" id="PS00467">
    <property type="entry name" value="RIBOSOMAL_L2"/>
    <property type="match status" value="1"/>
</dbReference>
<feature type="chain" id="PRO_1000141545" description="Large ribosomal subunit protein uL2">
    <location>
        <begin position="1"/>
        <end position="273"/>
    </location>
</feature>
<feature type="region of interest" description="Disordered" evidence="2">
    <location>
        <begin position="28"/>
        <end position="53"/>
    </location>
</feature>
<feature type="region of interest" description="Disordered" evidence="2">
    <location>
        <begin position="221"/>
        <end position="273"/>
    </location>
</feature>
<feature type="compositionally biased region" description="Low complexity" evidence="2">
    <location>
        <begin position="39"/>
        <end position="48"/>
    </location>
</feature>
<feature type="modified residue" description="N6-acetyllysine" evidence="1">
    <location>
        <position position="242"/>
    </location>
</feature>
<organism>
    <name type="scientific">Escherichia coli O7:K1 (strain IAI39 / ExPEC)</name>
    <dbReference type="NCBI Taxonomy" id="585057"/>
    <lineage>
        <taxon>Bacteria</taxon>
        <taxon>Pseudomonadati</taxon>
        <taxon>Pseudomonadota</taxon>
        <taxon>Gammaproteobacteria</taxon>
        <taxon>Enterobacterales</taxon>
        <taxon>Enterobacteriaceae</taxon>
        <taxon>Escherichia</taxon>
    </lineage>
</organism>
<sequence>MAVVKCKPTSPGRRHVVKVVNPELHKGKPFAPLLEKNSKSGGRNNNGRITTRHIGGGHKQAYRIVDFKRNKDGIPAVVERLEYDPNRSANIALVLYKDGERRYILAPKGLKAGDQIQSGVDAAIKPGNTLPMRNIPVGSTVHNVEMKPGKGGQLARSAGTYVQIVARDGAYVTLRLRSGEMRKVEADCRATLGEVGNAEHMLRVLGKAGAARWRGVRPTVRGTAMNPVDHPHGGGEGRNFGKHPVTPWGVQTKGKKTRSNKRTDKFIVRRRSK</sequence>
<comment type="function">
    <text evidence="1">One of the primary rRNA binding proteins. Required for association of the 30S and 50S subunits to form the 70S ribosome, for tRNA binding and peptide bond formation. It has been suggested to have peptidyltransferase activity; this is somewhat controversial. Makes several contacts with the 16S rRNA in the 70S ribosome.</text>
</comment>
<comment type="subunit">
    <text evidence="1">Part of the 50S ribosomal subunit. Forms a bridge to the 30S subunit in the 70S ribosome.</text>
</comment>
<comment type="similarity">
    <text evidence="1">Belongs to the universal ribosomal protein uL2 family.</text>
</comment>